<organism>
    <name type="scientific">Oenococcus oeni (strain ATCC BAA-331 / PSU-1)</name>
    <dbReference type="NCBI Taxonomy" id="203123"/>
    <lineage>
        <taxon>Bacteria</taxon>
        <taxon>Bacillati</taxon>
        <taxon>Bacillota</taxon>
        <taxon>Bacilli</taxon>
        <taxon>Lactobacillales</taxon>
        <taxon>Lactobacillaceae</taxon>
        <taxon>Oenococcus</taxon>
    </lineage>
</organism>
<dbReference type="EC" id="5.4.99.25" evidence="1"/>
<dbReference type="EMBL" id="CP000411">
    <property type="protein sequence ID" value="ABJ57185.1"/>
    <property type="molecule type" value="Genomic_DNA"/>
</dbReference>
<dbReference type="RefSeq" id="WP_002819196.1">
    <property type="nucleotide sequence ID" value="NC_008528.1"/>
</dbReference>
<dbReference type="SMR" id="Q04ED7"/>
<dbReference type="STRING" id="203123.OEOE_1313"/>
<dbReference type="GeneID" id="75065583"/>
<dbReference type="KEGG" id="ooe:OEOE_1313"/>
<dbReference type="eggNOG" id="COG0130">
    <property type="taxonomic scope" value="Bacteria"/>
</dbReference>
<dbReference type="HOGENOM" id="CLU_032087_0_1_9"/>
<dbReference type="Proteomes" id="UP000000774">
    <property type="component" value="Chromosome"/>
</dbReference>
<dbReference type="GO" id="GO:0003723">
    <property type="term" value="F:RNA binding"/>
    <property type="evidence" value="ECO:0007669"/>
    <property type="project" value="InterPro"/>
</dbReference>
<dbReference type="GO" id="GO:0160148">
    <property type="term" value="F:tRNA pseudouridine(55) synthase activity"/>
    <property type="evidence" value="ECO:0007669"/>
    <property type="project" value="UniProtKB-EC"/>
</dbReference>
<dbReference type="GO" id="GO:1990481">
    <property type="term" value="P:mRNA pseudouridine synthesis"/>
    <property type="evidence" value="ECO:0007669"/>
    <property type="project" value="TreeGrafter"/>
</dbReference>
<dbReference type="GO" id="GO:0031119">
    <property type="term" value="P:tRNA pseudouridine synthesis"/>
    <property type="evidence" value="ECO:0007669"/>
    <property type="project" value="UniProtKB-UniRule"/>
</dbReference>
<dbReference type="CDD" id="cd02573">
    <property type="entry name" value="PseudoU_synth_EcTruB"/>
    <property type="match status" value="1"/>
</dbReference>
<dbReference type="Gene3D" id="3.30.2350.10">
    <property type="entry name" value="Pseudouridine synthase"/>
    <property type="match status" value="1"/>
</dbReference>
<dbReference type="HAMAP" id="MF_01080">
    <property type="entry name" value="TruB_bact"/>
    <property type="match status" value="1"/>
</dbReference>
<dbReference type="InterPro" id="IPR020103">
    <property type="entry name" value="PsdUridine_synth_cat_dom_sf"/>
</dbReference>
<dbReference type="InterPro" id="IPR002501">
    <property type="entry name" value="PsdUridine_synth_N"/>
</dbReference>
<dbReference type="InterPro" id="IPR014780">
    <property type="entry name" value="tRNA_psdUridine_synth_TruB"/>
</dbReference>
<dbReference type="InterPro" id="IPR032819">
    <property type="entry name" value="TruB_C"/>
</dbReference>
<dbReference type="NCBIfam" id="TIGR00431">
    <property type="entry name" value="TruB"/>
    <property type="match status" value="1"/>
</dbReference>
<dbReference type="PANTHER" id="PTHR13767:SF2">
    <property type="entry name" value="PSEUDOURIDYLATE SYNTHASE TRUB1"/>
    <property type="match status" value="1"/>
</dbReference>
<dbReference type="PANTHER" id="PTHR13767">
    <property type="entry name" value="TRNA-PSEUDOURIDINE SYNTHASE"/>
    <property type="match status" value="1"/>
</dbReference>
<dbReference type="Pfam" id="PF16198">
    <property type="entry name" value="TruB_C_2"/>
    <property type="match status" value="1"/>
</dbReference>
<dbReference type="Pfam" id="PF01509">
    <property type="entry name" value="TruB_N"/>
    <property type="match status" value="1"/>
</dbReference>
<dbReference type="SUPFAM" id="SSF55120">
    <property type="entry name" value="Pseudouridine synthase"/>
    <property type="match status" value="1"/>
</dbReference>
<accession>Q04ED7</accession>
<keyword id="KW-0413">Isomerase</keyword>
<keyword id="KW-1185">Reference proteome</keyword>
<keyword id="KW-0819">tRNA processing</keyword>
<comment type="function">
    <text evidence="1">Responsible for synthesis of pseudouridine from uracil-55 in the psi GC loop of transfer RNAs.</text>
</comment>
<comment type="catalytic activity">
    <reaction evidence="1">
        <text>uridine(55) in tRNA = pseudouridine(55) in tRNA</text>
        <dbReference type="Rhea" id="RHEA:42532"/>
        <dbReference type="Rhea" id="RHEA-COMP:10101"/>
        <dbReference type="Rhea" id="RHEA-COMP:10102"/>
        <dbReference type="ChEBI" id="CHEBI:65314"/>
        <dbReference type="ChEBI" id="CHEBI:65315"/>
        <dbReference type="EC" id="5.4.99.25"/>
    </reaction>
</comment>
<comment type="similarity">
    <text evidence="1">Belongs to the pseudouridine synthase TruB family. Type 1 subfamily.</text>
</comment>
<proteinExistence type="inferred from homology"/>
<protein>
    <recommendedName>
        <fullName evidence="1">tRNA pseudouridine synthase B</fullName>
        <ecNumber evidence="1">5.4.99.25</ecNumber>
    </recommendedName>
    <alternativeName>
        <fullName evidence="1">tRNA pseudouridine(55) synthase</fullName>
        <shortName evidence="1">Psi55 synthase</shortName>
    </alternativeName>
    <alternativeName>
        <fullName evidence="1">tRNA pseudouridylate synthase</fullName>
    </alternativeName>
    <alternativeName>
        <fullName evidence="1">tRNA-uridine isomerase</fullName>
    </alternativeName>
</protein>
<evidence type="ECO:0000255" key="1">
    <source>
        <dbReference type="HAMAP-Rule" id="MF_01080"/>
    </source>
</evidence>
<name>TRUB_OENOB</name>
<reference key="1">
    <citation type="journal article" date="2006" name="Proc. Natl. Acad. Sci. U.S.A.">
        <title>Comparative genomics of the lactic acid bacteria.</title>
        <authorList>
            <person name="Makarova K.S."/>
            <person name="Slesarev A."/>
            <person name="Wolf Y.I."/>
            <person name="Sorokin A."/>
            <person name="Mirkin B."/>
            <person name="Koonin E.V."/>
            <person name="Pavlov A."/>
            <person name="Pavlova N."/>
            <person name="Karamychev V."/>
            <person name="Polouchine N."/>
            <person name="Shakhova V."/>
            <person name="Grigoriev I."/>
            <person name="Lou Y."/>
            <person name="Rohksar D."/>
            <person name="Lucas S."/>
            <person name="Huang K."/>
            <person name="Goodstein D.M."/>
            <person name="Hawkins T."/>
            <person name="Plengvidhya V."/>
            <person name="Welker D."/>
            <person name="Hughes J."/>
            <person name="Goh Y."/>
            <person name="Benson A."/>
            <person name="Baldwin K."/>
            <person name="Lee J.-H."/>
            <person name="Diaz-Muniz I."/>
            <person name="Dosti B."/>
            <person name="Smeianov V."/>
            <person name="Wechter W."/>
            <person name="Barabote R."/>
            <person name="Lorca G."/>
            <person name="Altermann E."/>
            <person name="Barrangou R."/>
            <person name="Ganesan B."/>
            <person name="Xie Y."/>
            <person name="Rawsthorne H."/>
            <person name="Tamir D."/>
            <person name="Parker C."/>
            <person name="Breidt F."/>
            <person name="Broadbent J.R."/>
            <person name="Hutkins R."/>
            <person name="O'Sullivan D."/>
            <person name="Steele J."/>
            <person name="Unlu G."/>
            <person name="Saier M.H. Jr."/>
            <person name="Klaenhammer T."/>
            <person name="Richardson P."/>
            <person name="Kozyavkin S."/>
            <person name="Weimer B.C."/>
            <person name="Mills D.A."/>
        </authorList>
    </citation>
    <scope>NUCLEOTIDE SEQUENCE [LARGE SCALE GENOMIC DNA]</scope>
    <source>
        <strain>ATCC BAA-331 / PSU-1</strain>
    </source>
</reference>
<sequence length="298" mass="33583">MYNGIVLVDKPAGLTSFDVVAKLRKIFQQKQVGHTGTLDPSVTGLLVIVLGKATKLIDYLQENQKQYRGTLILGLKTDTQDMDGQVTEMQFLKEAIADFKKKAAFDSFLGSSDQLPPMYSAVKVGGKHLYELARKGETIERKSRKIKVMEFQQVGGSKFDASKGQEYINFVATVSKGTYIRTLIEDFGAKLGLPATMMRLRRIEADGYDVKNSINLEEILASKTPRKFIIPMEKLLPTLPKYSVGSDDWQLIKNGGWLKELPISVSPVKIFYNNSFQAIYEKQDGFYKPKKMLIHEDH</sequence>
<feature type="chain" id="PRO_1000084632" description="tRNA pseudouridine synthase B">
    <location>
        <begin position="1"/>
        <end position="298"/>
    </location>
</feature>
<feature type="active site" description="Nucleophile" evidence="1">
    <location>
        <position position="39"/>
    </location>
</feature>
<gene>
    <name evidence="1" type="primary">truB</name>
    <name type="ordered locus">OEOE_1313</name>
</gene>